<dbReference type="EMBL" id="X03100">
    <property type="protein sequence ID" value="CAA26887.1"/>
    <property type="molecule type" value="Genomic_DNA"/>
</dbReference>
<dbReference type="EMBL" id="M27487">
    <property type="protein sequence ID" value="AAA63220.1"/>
    <property type="molecule type" value="mRNA"/>
</dbReference>
<dbReference type="EMBL" id="AK292709">
    <property type="protein sequence ID" value="BAF85398.1"/>
    <property type="molecule type" value="mRNA"/>
</dbReference>
<dbReference type="EMBL" id="AL645931">
    <property type="status" value="NOT_ANNOTATED_CDS"/>
    <property type="molecule type" value="Genomic_DNA"/>
</dbReference>
<dbReference type="EMBL" id="AL805913">
    <property type="status" value="NOT_ANNOTATED_CDS"/>
    <property type="molecule type" value="Genomic_DNA"/>
</dbReference>
<dbReference type="EMBL" id="BX120009">
    <property type="status" value="NOT_ANNOTATED_CDS"/>
    <property type="molecule type" value="Genomic_DNA"/>
</dbReference>
<dbReference type="EMBL" id="BX005422">
    <property type="status" value="NOT_ANNOTATED_CDS"/>
    <property type="molecule type" value="Genomic_DNA"/>
</dbReference>
<dbReference type="EMBL" id="CR759829">
    <property type="status" value="NOT_ANNOTATED_CDS"/>
    <property type="molecule type" value="Genomic_DNA"/>
</dbReference>
<dbReference type="EMBL" id="CR759795">
    <property type="status" value="NOT_ANNOTATED_CDS"/>
    <property type="molecule type" value="Genomic_DNA"/>
</dbReference>
<dbReference type="EMBL" id="CR847849">
    <property type="status" value="NOT_ANNOTATED_CDS"/>
    <property type="molecule type" value="Genomic_DNA"/>
</dbReference>
<dbReference type="EMBL" id="CR759904">
    <property type="status" value="NOT_ANNOTATED_CDS"/>
    <property type="molecule type" value="Genomic_DNA"/>
</dbReference>
<dbReference type="EMBL" id="CR762479">
    <property type="status" value="NOT_ANNOTATED_CDS"/>
    <property type="molecule type" value="Genomic_DNA"/>
</dbReference>
<dbReference type="EMBL" id="CH471081">
    <property type="protein sequence ID" value="EAX03669.1"/>
    <property type="molecule type" value="Genomic_DNA"/>
</dbReference>
<dbReference type="EMBL" id="X00457">
    <property type="protein sequence ID" value="CAA25143.1"/>
    <property type="molecule type" value="mRNA"/>
</dbReference>
<dbReference type="EMBL" id="Z48473">
    <property type="status" value="NOT_ANNOTATED_CDS"/>
    <property type="molecule type" value="Genomic_DNA"/>
</dbReference>
<dbReference type="EMBL" id="AF013767">
    <property type="protein sequence ID" value="AAC64233.1"/>
    <property type="status" value="ALT_SEQ"/>
    <property type="molecule type" value="Genomic_DNA"/>
</dbReference>
<dbReference type="EMBL" id="X78199">
    <property type="status" value="NOT_ANNOTATED_CDS"/>
    <property type="molecule type" value="Genomic_DNA"/>
</dbReference>
<dbReference type="EMBL" id="X82393">
    <property type="status" value="NOT_ANNOTATED_CDS"/>
    <property type="molecule type" value="Genomic_DNA"/>
</dbReference>
<dbReference type="EMBL" id="X82394">
    <property type="status" value="NOT_ANNOTATED_CDS"/>
    <property type="molecule type" value="Genomic_DNA"/>
</dbReference>
<dbReference type="EMBL" id="X78198">
    <property type="status" value="NOT_ANNOTATED_CDS"/>
    <property type="molecule type" value="Genomic_DNA"/>
</dbReference>
<dbReference type="EMBL" id="X82391">
    <property type="status" value="NOT_ANNOTATED_CDS"/>
    <property type="molecule type" value="Genomic_DNA"/>
</dbReference>
<dbReference type="EMBL" id="X79475">
    <property type="status" value="NOT_ANNOTATED_CDS"/>
    <property type="molecule type" value="Genomic_DNA"/>
</dbReference>
<dbReference type="EMBL" id="X79477">
    <property type="status" value="NOT_ANNOTATED_CDS"/>
    <property type="molecule type" value="Genomic_DNA"/>
</dbReference>
<dbReference type="EMBL" id="X79479">
    <property type="status" value="NOT_ANNOTATED_CDS"/>
    <property type="molecule type" value="Genomic_DNA"/>
</dbReference>
<dbReference type="EMBL" id="X79481">
    <property type="status" value="NOT_ANNOTATED_CDS"/>
    <property type="molecule type" value="Genomic_DNA"/>
</dbReference>
<dbReference type="EMBL" id="AF165160">
    <property type="protein sequence ID" value="AAD47826.1"/>
    <property type="molecule type" value="Genomic_DNA"/>
</dbReference>
<dbReference type="EMBL" id="AY618553">
    <property type="protein sequence ID" value="AAT92097.1"/>
    <property type="molecule type" value="Genomic_DNA"/>
</dbReference>
<dbReference type="EMBL" id="EU729350">
    <property type="protein sequence ID" value="ACH88749.1"/>
    <property type="molecule type" value="Genomic_DNA"/>
</dbReference>
<dbReference type="EMBL" id="DQ274060">
    <property type="protein sequence ID" value="ABB88406.1"/>
    <property type="molecule type" value="Genomic_DNA"/>
</dbReference>
<dbReference type="EMBL" id="DQ274061">
    <property type="protein sequence ID" value="ABB88407.1"/>
    <property type="molecule type" value="Genomic_DNA"/>
</dbReference>
<dbReference type="EMBL" id="EU304462">
    <property type="protein sequence ID" value="ABY27081.1"/>
    <property type="molecule type" value="Genomic_DNA"/>
</dbReference>
<dbReference type="EMBL" id="U87556">
    <property type="protein sequence ID" value="AAB97110.1"/>
    <property type="molecule type" value="Genomic_DNA"/>
</dbReference>
<dbReference type="EMBL" id="AF346471">
    <property type="protein sequence ID" value="AAK27152.1"/>
    <property type="molecule type" value="Genomic_DNA"/>
</dbReference>
<dbReference type="EMBL" id="AY650051">
    <property type="protein sequence ID" value="AAT67468.1"/>
    <property type="molecule type" value="Genomic_DNA"/>
</dbReference>
<dbReference type="EMBL" id="AF076284">
    <property type="protein sequence ID" value="AAD42927.1"/>
    <property type="status" value="ALT_SEQ"/>
    <property type="molecule type" value="Genomic_DNA"/>
</dbReference>
<dbReference type="EMBL" id="X96984">
    <property type="status" value="NOT_ANNOTATED_CDS"/>
    <property type="molecule type" value="Genomic_DNA"/>
</dbReference>
<dbReference type="EMBL" id="X80482">
    <property type="status" value="NOT_ANNOTATED_CDS"/>
    <property type="molecule type" value="Genomic_DNA"/>
</dbReference>
<dbReference type="EMBL" id="X81347">
    <property type="status" value="NOT_ANNOTATED_CDS"/>
    <property type="molecule type" value="Genomic_DNA"/>
</dbReference>
<dbReference type="EMBL" id="X81348">
    <property type="status" value="NOT_ANNOTATED_CDS"/>
    <property type="molecule type" value="Genomic_DNA"/>
</dbReference>
<dbReference type="EMBL" id="K00514">
    <property type="protein sequence ID" value="AAA59786.1"/>
    <property type="molecule type" value="Genomic_DNA"/>
</dbReference>
<dbReference type="CCDS" id="CCDS4764.1"/>
<dbReference type="PIR" id="A29313">
    <property type="entry name" value="HLHUSB"/>
</dbReference>
<dbReference type="RefSeq" id="NP_001229453.1">
    <property type="nucleotide sequence ID" value="NM_001242524.2"/>
</dbReference>
<dbReference type="RefSeq" id="NP_001229454.1">
    <property type="nucleotide sequence ID" value="NM_001242525.2"/>
</dbReference>
<dbReference type="RefSeq" id="NP_001391949.1">
    <property type="nucleotide sequence ID" value="NM_001405020.1"/>
</dbReference>
<dbReference type="RefSeq" id="NP_291032.2">
    <property type="nucleotide sequence ID" value="NM_033554.3"/>
</dbReference>
<dbReference type="PDB" id="3LQZ">
    <property type="method" value="X-ray"/>
    <property type="resolution" value="3.25 A"/>
    <property type="chains" value="A=32-212"/>
</dbReference>
<dbReference type="PDB" id="4P4K">
    <property type="method" value="X-ray"/>
    <property type="resolution" value="2.80 A"/>
    <property type="chains" value="A/E=32-214"/>
</dbReference>
<dbReference type="PDB" id="4P4R">
    <property type="method" value="X-ray"/>
    <property type="resolution" value="3.00 A"/>
    <property type="chains" value="A/C=32-214"/>
</dbReference>
<dbReference type="PDB" id="4P57">
    <property type="method" value="X-ray"/>
    <property type="resolution" value="2.60 A"/>
    <property type="chains" value="A/C=32-214"/>
</dbReference>
<dbReference type="PDB" id="4P5K">
    <property type="method" value="X-ray"/>
    <property type="resolution" value="2.59 A"/>
    <property type="chains" value="A/D=32-214"/>
</dbReference>
<dbReference type="PDB" id="4P5M">
    <property type="method" value="X-ray"/>
    <property type="resolution" value="1.70 A"/>
    <property type="chains" value="A/C/E/G=32-214"/>
</dbReference>
<dbReference type="PDB" id="7T2A">
    <property type="method" value="X-ray"/>
    <property type="resolution" value="3.04 A"/>
    <property type="chains" value="A/D=32-212"/>
</dbReference>
<dbReference type="PDB" id="7T2B">
    <property type="method" value="X-ray"/>
    <property type="resolution" value="2.80 A"/>
    <property type="chains" value="A/F/K/P=32-212"/>
</dbReference>
<dbReference type="PDB" id="7T2C">
    <property type="method" value="X-ray"/>
    <property type="resolution" value="3.10 A"/>
    <property type="chains" value="A=32-212"/>
</dbReference>
<dbReference type="PDB" id="7T2D">
    <property type="method" value="X-ray"/>
    <property type="resolution" value="3.40 A"/>
    <property type="chains" value="A/F/K/P=32-212"/>
</dbReference>
<dbReference type="PDBsum" id="3LQZ"/>
<dbReference type="PDBsum" id="4P4K"/>
<dbReference type="PDBsum" id="4P4R"/>
<dbReference type="PDBsum" id="4P57"/>
<dbReference type="PDBsum" id="4P5K"/>
<dbReference type="PDBsum" id="4P5M"/>
<dbReference type="PDBsum" id="7T2A"/>
<dbReference type="PDBsum" id="7T2B"/>
<dbReference type="PDBsum" id="7T2C"/>
<dbReference type="PDBsum" id="7T2D"/>
<dbReference type="SMR" id="P20036"/>
<dbReference type="BioGRID" id="109358">
    <property type="interactions" value="122"/>
</dbReference>
<dbReference type="FunCoup" id="P20036">
    <property type="interactions" value="578"/>
</dbReference>
<dbReference type="IntAct" id="P20036">
    <property type="interactions" value="98"/>
</dbReference>
<dbReference type="MINT" id="P20036"/>
<dbReference type="STRING" id="9606.ENSP00000393566"/>
<dbReference type="GlyConnect" id="1365">
    <property type="glycosylation" value="1 N-Linked glycan (1 site)"/>
</dbReference>
<dbReference type="GlyCosmos" id="P20036">
    <property type="glycosylation" value="2 sites, 1 glycan"/>
</dbReference>
<dbReference type="GlyGen" id="P20036">
    <property type="glycosylation" value="3 sites, 58 N-linked glycans (2 sites)"/>
</dbReference>
<dbReference type="iPTMnet" id="P20036"/>
<dbReference type="PhosphoSitePlus" id="P20036"/>
<dbReference type="BioMuta" id="HLA-DPA1"/>
<dbReference type="DMDM" id="122204"/>
<dbReference type="jPOST" id="P20036"/>
<dbReference type="MassIVE" id="P20036"/>
<dbReference type="PaxDb" id="9606-ENSP00000393566"/>
<dbReference type="PeptideAtlas" id="P20036"/>
<dbReference type="ProteomicsDB" id="53716"/>
<dbReference type="Antibodypedia" id="45587">
    <property type="antibodies" value="307 antibodies from 31 providers"/>
</dbReference>
<dbReference type="DNASU" id="3113"/>
<dbReference type="Ensembl" id="ENST00000374808.6">
    <property type="protein sequence ID" value="ENSP00000363941.2"/>
    <property type="gene ID" value="ENSG00000168384.11"/>
</dbReference>
<dbReference type="Ensembl" id="ENST00000383224.6">
    <property type="protein sequence ID" value="ENSP00000372711.2"/>
    <property type="gene ID" value="ENSG00000206291.10"/>
</dbReference>
<dbReference type="Ensembl" id="ENST00000415247.6">
    <property type="protein sequence ID" value="ENSP00000405838.2"/>
    <property type="gene ID" value="ENSG00000224103.7"/>
</dbReference>
<dbReference type="Ensembl" id="ENST00000419277.5">
    <property type="protein sequence ID" value="ENSP00000393566.1"/>
    <property type="gene ID" value="ENSG00000231389.8"/>
</dbReference>
<dbReference type="Ensembl" id="ENST00000422504.5">
    <property type="protein sequence ID" value="ENSP00000406250.1"/>
    <property type="gene ID" value="ENSG00000228163.8"/>
</dbReference>
<dbReference type="Ensembl" id="ENST00000443117.5">
    <property type="protein sequence ID" value="ENSP00000397587.1"/>
    <property type="gene ID" value="ENSG00000235844.8"/>
</dbReference>
<dbReference type="Ensembl" id="ENST00000454805.5">
    <property type="protein sequence ID" value="ENSP00000397139.1"/>
    <property type="gene ID" value="ENSG00000229685.8"/>
</dbReference>
<dbReference type="Ensembl" id="ENST00000515317.5">
    <property type="protein sequence ID" value="ENSP00000427429.1"/>
    <property type="gene ID" value="ENSG00000236177.9"/>
</dbReference>
<dbReference type="Ensembl" id="ENST00000692443.1">
    <property type="protein sequence ID" value="ENSP00000509163.1"/>
    <property type="gene ID" value="ENSG00000231389.8"/>
</dbReference>
<dbReference type="GeneID" id="3113"/>
<dbReference type="KEGG" id="hsa:3113"/>
<dbReference type="MANE-Select" id="ENST00000692443.1">
    <property type="protein sequence ID" value="ENSP00000509163.1"/>
    <property type="RefSeq nucleotide sequence ID" value="NM_033554.4"/>
    <property type="RefSeq protein sequence ID" value="NP_291032.2"/>
</dbReference>
<dbReference type="AGR" id="HGNC:4938"/>
<dbReference type="CTD" id="3113"/>
<dbReference type="DisGeNET" id="3113"/>
<dbReference type="GeneCards" id="HLA-DPA1"/>
<dbReference type="HGNC" id="HGNC:4938">
    <property type="gene designation" value="HLA-DPA1"/>
</dbReference>
<dbReference type="HPA" id="ENSG00000231389">
    <property type="expression patterns" value="Tissue enhanced (lung, lymphoid tissue)"/>
</dbReference>
<dbReference type="MalaCards" id="HLA-DPA1"/>
<dbReference type="MIM" id="142880">
    <property type="type" value="gene"/>
</dbReference>
<dbReference type="neXtProt" id="NX_P20036"/>
<dbReference type="OpenTargets" id="ENSG00000231389"/>
<dbReference type="Orphanet" id="900">
    <property type="disease" value="Granulomatosis with polyangiitis"/>
</dbReference>
<dbReference type="PharmGKB" id="PA35062"/>
<dbReference type="VEuPathDB" id="HostDB:ENSG00000231389"/>
<dbReference type="eggNOG" id="ENOG502RXYJ">
    <property type="taxonomic scope" value="Eukaryota"/>
</dbReference>
<dbReference type="GeneTree" id="ENSGT00940000162498"/>
<dbReference type="HOGENOM" id="CLU_069380_0_0_1"/>
<dbReference type="InParanoid" id="P20036"/>
<dbReference type="OMA" id="LRHWEAQ"/>
<dbReference type="PAN-GO" id="P20036">
    <property type="GO annotations" value="6 GO annotations based on evolutionary models"/>
</dbReference>
<dbReference type="PhylomeDB" id="P20036"/>
<dbReference type="TreeFam" id="TF333797"/>
<dbReference type="PathwayCommons" id="P20036"/>
<dbReference type="Reactome" id="R-HSA-202424">
    <property type="pathway name" value="Downstream TCR signaling"/>
</dbReference>
<dbReference type="Reactome" id="R-HSA-202427">
    <property type="pathway name" value="Phosphorylation of CD3 and TCR zeta chains"/>
</dbReference>
<dbReference type="Reactome" id="R-HSA-202430">
    <property type="pathway name" value="Translocation of ZAP-70 to Immunological synapse"/>
</dbReference>
<dbReference type="Reactome" id="R-HSA-202433">
    <property type="pathway name" value="Generation of second messenger molecules"/>
</dbReference>
<dbReference type="Reactome" id="R-HSA-2132295">
    <property type="pathway name" value="MHC class II antigen presentation"/>
</dbReference>
<dbReference type="Reactome" id="R-HSA-389948">
    <property type="pathway name" value="Co-inhibition by PD-1"/>
</dbReference>
<dbReference type="Reactome" id="R-HSA-877300">
    <property type="pathway name" value="Interferon gamma signaling"/>
</dbReference>
<dbReference type="SignaLink" id="P20036"/>
<dbReference type="SIGNOR" id="P20036"/>
<dbReference type="BioGRID-ORCS" id="3113">
    <property type="hits" value="10 hits in 1133 CRISPR screens"/>
</dbReference>
<dbReference type="ChiTaRS" id="HLA-DPA1">
    <property type="organism name" value="human"/>
</dbReference>
<dbReference type="EvolutionaryTrace" id="P20036"/>
<dbReference type="GenomeRNAi" id="3113"/>
<dbReference type="Pharos" id="P20036">
    <property type="development level" value="Tbio"/>
</dbReference>
<dbReference type="PRO" id="PR:P20036"/>
<dbReference type="Proteomes" id="UP000005640">
    <property type="component" value="Chromosome 6"/>
</dbReference>
<dbReference type="RNAct" id="P20036">
    <property type="molecule type" value="protein"/>
</dbReference>
<dbReference type="Bgee" id="ENSG00000231389">
    <property type="expression patterns" value="Expressed in monocyte and 100 other cell types or tissues"/>
</dbReference>
<dbReference type="ExpressionAtlas" id="P20036">
    <property type="expression patterns" value="baseline and differential"/>
</dbReference>
<dbReference type="GO" id="GO:0009986">
    <property type="term" value="C:cell surface"/>
    <property type="evidence" value="ECO:0000315"/>
    <property type="project" value="UniProtKB"/>
</dbReference>
<dbReference type="GO" id="GO:0030669">
    <property type="term" value="C:clathrin-coated endocytic vesicle membrane"/>
    <property type="evidence" value="ECO:0000304"/>
    <property type="project" value="Reactome"/>
</dbReference>
<dbReference type="GO" id="GO:0030666">
    <property type="term" value="C:endocytic vesicle membrane"/>
    <property type="evidence" value="ECO:0000304"/>
    <property type="project" value="Reactome"/>
</dbReference>
<dbReference type="GO" id="GO:0012507">
    <property type="term" value="C:ER to Golgi transport vesicle membrane"/>
    <property type="evidence" value="ECO:0000304"/>
    <property type="project" value="Reactome"/>
</dbReference>
<dbReference type="GO" id="GO:0000139">
    <property type="term" value="C:Golgi membrane"/>
    <property type="evidence" value="ECO:0000304"/>
    <property type="project" value="Reactome"/>
</dbReference>
<dbReference type="GO" id="GO:0043231">
    <property type="term" value="C:intracellular membrane-bounded organelle"/>
    <property type="evidence" value="ECO:0000314"/>
    <property type="project" value="HPA"/>
</dbReference>
<dbReference type="GO" id="GO:0031902">
    <property type="term" value="C:late endosome membrane"/>
    <property type="evidence" value="ECO:0000318"/>
    <property type="project" value="GO_Central"/>
</dbReference>
<dbReference type="GO" id="GO:0098553">
    <property type="term" value="C:lumenal side of endoplasmic reticulum membrane"/>
    <property type="evidence" value="ECO:0000304"/>
    <property type="project" value="Reactome"/>
</dbReference>
<dbReference type="GO" id="GO:0005765">
    <property type="term" value="C:lysosomal membrane"/>
    <property type="evidence" value="ECO:0000318"/>
    <property type="project" value="GO_Central"/>
</dbReference>
<dbReference type="GO" id="GO:0042613">
    <property type="term" value="C:MHC class II protein complex"/>
    <property type="evidence" value="ECO:0000314"/>
    <property type="project" value="UniProtKB"/>
</dbReference>
<dbReference type="GO" id="GO:0005886">
    <property type="term" value="C:plasma membrane"/>
    <property type="evidence" value="ECO:0000304"/>
    <property type="project" value="Reactome"/>
</dbReference>
<dbReference type="GO" id="GO:0032588">
    <property type="term" value="C:trans-Golgi network membrane"/>
    <property type="evidence" value="ECO:0000304"/>
    <property type="project" value="Reactome"/>
</dbReference>
<dbReference type="GO" id="GO:0030658">
    <property type="term" value="C:transport vesicle membrane"/>
    <property type="evidence" value="ECO:0000304"/>
    <property type="project" value="Reactome"/>
</dbReference>
<dbReference type="GO" id="GO:0023026">
    <property type="term" value="F:MHC class II protein complex binding"/>
    <property type="evidence" value="ECO:0000318"/>
    <property type="project" value="GO_Central"/>
</dbReference>
<dbReference type="GO" id="GO:0032395">
    <property type="term" value="F:MHC class II receptor activity"/>
    <property type="evidence" value="ECO:0000303"/>
    <property type="project" value="UniProtKB"/>
</dbReference>
<dbReference type="GO" id="GO:0042605">
    <property type="term" value="F:peptide antigen binding"/>
    <property type="evidence" value="ECO:0000314"/>
    <property type="project" value="UniProtKB"/>
</dbReference>
<dbReference type="GO" id="GO:0002250">
    <property type="term" value="P:adaptive immune response"/>
    <property type="evidence" value="ECO:0007669"/>
    <property type="project" value="UniProtKB-KW"/>
</dbReference>
<dbReference type="GO" id="GO:0019886">
    <property type="term" value="P:antigen processing and presentation of exogenous peptide antigen via MHC class II"/>
    <property type="evidence" value="ECO:0000315"/>
    <property type="project" value="UniProtKB"/>
</dbReference>
<dbReference type="GO" id="GO:0071346">
    <property type="term" value="P:cellular response to type II interferon"/>
    <property type="evidence" value="ECO:0000314"/>
    <property type="project" value="UniProtKB"/>
</dbReference>
<dbReference type="GO" id="GO:0006955">
    <property type="term" value="P:immune response"/>
    <property type="evidence" value="ECO:0000303"/>
    <property type="project" value="UniProtKB"/>
</dbReference>
<dbReference type="GO" id="GO:0002503">
    <property type="term" value="P:peptide antigen assembly with MHC class II protein complex"/>
    <property type="evidence" value="ECO:0000318"/>
    <property type="project" value="GO_Central"/>
</dbReference>
<dbReference type="GO" id="GO:0050778">
    <property type="term" value="P:positive regulation of immune response"/>
    <property type="evidence" value="ECO:0000318"/>
    <property type="project" value="GO_Central"/>
</dbReference>
<dbReference type="GO" id="GO:0050870">
    <property type="term" value="P:positive regulation of T cell activation"/>
    <property type="evidence" value="ECO:0000315"/>
    <property type="project" value="UniProtKB"/>
</dbReference>
<dbReference type="GO" id="GO:0042102">
    <property type="term" value="P:positive regulation of T cell proliferation"/>
    <property type="evidence" value="ECO:0000315"/>
    <property type="project" value="UniProtKB"/>
</dbReference>
<dbReference type="GO" id="GO:0032729">
    <property type="term" value="P:positive regulation of type II interferon production"/>
    <property type="evidence" value="ECO:0000315"/>
    <property type="project" value="UniProtKB"/>
</dbReference>
<dbReference type="CDD" id="cd05767">
    <property type="entry name" value="IgC1_MHC_II_alpha"/>
    <property type="match status" value="1"/>
</dbReference>
<dbReference type="FunFam" id="2.60.40.10:FF:000280">
    <property type="entry name" value="HLA class II histocompatibility antigen, DR alpha chain"/>
    <property type="match status" value="1"/>
</dbReference>
<dbReference type="FunFam" id="3.10.320.10:FF:000002">
    <property type="entry name" value="HLA class II histocompatibility antigen, DR alpha chain"/>
    <property type="match status" value="1"/>
</dbReference>
<dbReference type="Gene3D" id="3.10.320.10">
    <property type="entry name" value="Class II Histocompatibility Antigen, M Beta Chain, Chain B, domain 1"/>
    <property type="match status" value="1"/>
</dbReference>
<dbReference type="Gene3D" id="2.60.40.10">
    <property type="entry name" value="Immunoglobulins"/>
    <property type="match status" value="1"/>
</dbReference>
<dbReference type="InterPro" id="IPR007110">
    <property type="entry name" value="Ig-like_dom"/>
</dbReference>
<dbReference type="InterPro" id="IPR036179">
    <property type="entry name" value="Ig-like_dom_sf"/>
</dbReference>
<dbReference type="InterPro" id="IPR013783">
    <property type="entry name" value="Ig-like_fold"/>
</dbReference>
<dbReference type="InterPro" id="IPR003006">
    <property type="entry name" value="Ig/MHC_CS"/>
</dbReference>
<dbReference type="InterPro" id="IPR003597">
    <property type="entry name" value="Ig_C1-set"/>
</dbReference>
<dbReference type="InterPro" id="IPR050160">
    <property type="entry name" value="MHC/Immunoglobulin"/>
</dbReference>
<dbReference type="InterPro" id="IPR011162">
    <property type="entry name" value="MHC_I/II-like_Ag-recog"/>
</dbReference>
<dbReference type="InterPro" id="IPR014745">
    <property type="entry name" value="MHC_II_a/b_N"/>
</dbReference>
<dbReference type="InterPro" id="IPR001003">
    <property type="entry name" value="MHC_II_a_N"/>
</dbReference>
<dbReference type="PANTHER" id="PTHR19944:SF64">
    <property type="entry name" value="HLA CLASS II HISTOCOMPATIBILITY ANTIGEN, DP ALPHA 1 CHAIN"/>
    <property type="match status" value="1"/>
</dbReference>
<dbReference type="PANTHER" id="PTHR19944">
    <property type="entry name" value="MHC CLASS II-RELATED"/>
    <property type="match status" value="1"/>
</dbReference>
<dbReference type="Pfam" id="PF07654">
    <property type="entry name" value="C1-set"/>
    <property type="match status" value="1"/>
</dbReference>
<dbReference type="Pfam" id="PF00993">
    <property type="entry name" value="MHC_II_alpha"/>
    <property type="match status" value="1"/>
</dbReference>
<dbReference type="SMART" id="SM00407">
    <property type="entry name" value="IGc1"/>
    <property type="match status" value="1"/>
</dbReference>
<dbReference type="SMART" id="SM00920">
    <property type="entry name" value="MHC_II_alpha"/>
    <property type="match status" value="1"/>
</dbReference>
<dbReference type="SUPFAM" id="SSF48726">
    <property type="entry name" value="Immunoglobulin"/>
    <property type="match status" value="1"/>
</dbReference>
<dbReference type="SUPFAM" id="SSF54452">
    <property type="entry name" value="MHC antigen-recognition domain"/>
    <property type="match status" value="1"/>
</dbReference>
<dbReference type="PROSITE" id="PS50835">
    <property type="entry name" value="IG_LIKE"/>
    <property type="match status" value="1"/>
</dbReference>
<dbReference type="PROSITE" id="PS00290">
    <property type="entry name" value="IG_MHC"/>
    <property type="match status" value="1"/>
</dbReference>
<protein>
    <recommendedName>
        <fullName>HLA class II histocompatibility antigen, DP alpha 1 chain</fullName>
    </recommendedName>
    <alternativeName>
        <fullName>DP(W3)</fullName>
    </alternativeName>
    <alternativeName>
        <fullName>DP(W4)</fullName>
    </alternativeName>
    <alternativeName>
        <fullName>HLA-SB alpha chain</fullName>
    </alternativeName>
    <alternativeName>
        <fullName>MHC class II DP3-alpha</fullName>
    </alternativeName>
    <alternativeName>
        <fullName>MHC class II DPA1</fullName>
    </alternativeName>
</protein>
<keyword id="KW-0002">3D-structure</keyword>
<keyword id="KW-1064">Adaptive immunity</keyword>
<keyword id="KW-1003">Cell membrane</keyword>
<keyword id="KW-1015">Disulfide bond</keyword>
<keyword id="KW-0256">Endoplasmic reticulum</keyword>
<keyword id="KW-0967">Endosome</keyword>
<keyword id="KW-0325">Glycoprotein</keyword>
<keyword id="KW-0333">Golgi apparatus</keyword>
<keyword id="KW-0391">Immunity</keyword>
<keyword id="KW-0458">Lysosome</keyword>
<keyword id="KW-0472">Membrane</keyword>
<keyword id="KW-0491">MHC II</keyword>
<keyword id="KW-1267">Proteomics identification</keyword>
<keyword id="KW-1185">Reference proteome</keyword>
<keyword id="KW-0732">Signal</keyword>
<keyword id="KW-0812">Transmembrane</keyword>
<keyword id="KW-1133">Transmembrane helix</keyword>
<name>DPA1_HUMAN</name>
<organism>
    <name type="scientific">Homo sapiens</name>
    <name type="common">Human</name>
    <dbReference type="NCBI Taxonomy" id="9606"/>
    <lineage>
        <taxon>Eukaryota</taxon>
        <taxon>Metazoa</taxon>
        <taxon>Chordata</taxon>
        <taxon>Craniata</taxon>
        <taxon>Vertebrata</taxon>
        <taxon>Euteleostomi</taxon>
        <taxon>Mammalia</taxon>
        <taxon>Eutheria</taxon>
        <taxon>Euarchontoglires</taxon>
        <taxon>Primates</taxon>
        <taxon>Haplorrhini</taxon>
        <taxon>Catarrhini</taxon>
        <taxon>Hominidae</taxon>
        <taxon>Homo</taxon>
    </lineage>
</organism>
<comment type="function">
    <text>Binds peptides derived from antigens that access the endocytic route of antigen presenting cells (APC) and presents them on the cell surface for recognition by the CD4 T-cells. The peptide binding cleft accommodates peptides of 10-30 residues. The peptides presented by MHC class II molecules are generated mostly by degradation of proteins that access the endocytic route, where they are processed by lysosomal proteases and other hydrolases. Exogenous antigens that have been endocytosed by the APC are thus readily available for presentation via MHC II molecules, and for this reason this antigen presentation pathway is usually referred to as exogenous. As membrane proteins on their way to degradation in lysosomes as part of their normal turn-over are also contained in the endosomal/lysosomal compartments, exogenous antigens must compete with those derived from endogenous components. Autophagy is also a source of endogenous peptides, autophagosomes constitutively fuse with MHC class II loading compartments. In addition to APCs, other cells of the gastrointestinal tract, such as epithelial cells, express MHC class II molecules and CD74 and act as APCs, which is an unusual trait of the GI tract. To produce a MHC class II molecule that presents an antigen, three MHC class II molecules (heterodimers of an alpha and a beta chain) associate with a CD74 trimer in the ER to form a heterononamer. Soon after the entry of this complex into the endosomal/lysosomal system where antigen processing occurs, CD74 undergoes a sequential degradation by various proteases, including CTSS and CTSL, leaving a small fragment termed CLIP (class-II-associated invariant chain peptide). The removal of CLIP is facilitated by HLA-DM via direct binding to the alpha-beta-CLIP complex so that CLIP is released. HLA-DM stabilizes MHC class II molecules until primary high affinity antigenic peptides are bound. The MHC II molecule bound to a peptide is then transported to the cell membrane surface. In B-cells, the interaction between HLA-DM and MHC class II molecules is regulated by HLA-DO. Primary dendritic cells (DCs) also to express HLA-DO. Lysosomal microenvironment has been implicated in the regulation of antigen loading into MHC II molecules, increased acidification produces increased proteolysis and efficient peptide loading.</text>
</comment>
<comment type="subunit">
    <text>Heterodimer of an alpha and a beta subunit; also referred as MHC class II molecule. In the endoplasmic reticulum (ER) it forms a heterononamer; 3 MHC class II molecules bind to a CD74 homotrimer (also known as invariant chain or HLA class II histocompatibility antigen gamma chain). In the endosomal/lysosomal system; CD74 undergoes sequential degradation by various proteases; leaving a small fragment termed CLIP on each MHC class II molecule. MHC class II molecule interacts with HLA_DM, and HLA_DO in B-cells, in order to release CLIP and facilitate the binding of antigenic peptides.</text>
</comment>
<comment type="interaction">
    <interactant intactId="EBI-2802853">
        <id>P20036</id>
    </interactant>
    <interactant intactId="EBI-465059">
        <id>Q12772</id>
        <label>SREBF2</label>
    </interactant>
    <organismsDiffer>false</organismsDiffer>
    <experiments>3</experiments>
</comment>
<comment type="subcellular location">
    <subcellularLocation>
        <location>Cell membrane</location>
        <topology>Single-pass type I membrane protein</topology>
    </subcellularLocation>
    <subcellularLocation>
        <location>Endoplasmic reticulum membrane</location>
        <topology>Single-pass type I membrane protein</topology>
    </subcellularLocation>
    <subcellularLocation>
        <location>Golgi apparatus</location>
        <location>trans-Golgi network membrane</location>
        <topology>Single-pass type I membrane protein</topology>
    </subcellularLocation>
    <subcellularLocation>
        <location>Endosome membrane</location>
        <topology>Single-pass type I membrane protein</topology>
    </subcellularLocation>
    <subcellularLocation>
        <location>Lysosome membrane</location>
        <topology>Single-pass type I membrane protein</topology>
    </subcellularLocation>
    <text>The MHC class II complex transits through a number of intracellular compartments in the endocytic pathway until it reaches the cell membrane for antigen presentation.</text>
</comment>
<comment type="polymorphism">
    <text>The following alleles of DPA1 are known: DPA1*01:03, DPA1*01:04, DPA1*01:05, DPA1*01:06, DPA1*01:07, DPA1*01:08, DPA1*01:09, DPA1*01:10, DPA1*02:01, DPA1*02:02, DPA1*02:03, DPA1*02:04, DPA1*03:01, DPA1*03:02, DPA1*03:03, DPA1*04:01 The sequence shown is that of DPA1*01:03.</text>
</comment>
<comment type="similarity">
    <text evidence="4">Belongs to the MHC class II family.</text>
</comment>
<comment type="sequence caution" evidence="4">
    <conflict type="erroneous gene model prediction">
        <sequence resource="EMBL-CDS" id="AAC64233"/>
    </conflict>
</comment>
<comment type="sequence caution" evidence="4">
    <conflict type="erroneous gene model prediction">
        <sequence resource="EMBL-CDS" id="AAD42927"/>
    </conflict>
</comment>
<proteinExistence type="evidence at protein level"/>
<reference key="1">
    <citation type="journal article" date="1985" name="Nucleic Acids Res.">
        <title>The genomic organisation and nucleotide sequence of the HLA-SB(DP) alpha gene.</title>
        <authorList>
            <person name="Lawrance S.K."/>
            <person name="Das H.K."/>
            <person name="Pan J."/>
            <person name="Weissman S.M."/>
        </authorList>
    </citation>
    <scope>NUCLEOTIDE SEQUENCE [GENOMIC DNA] (ALLELE DPA1*01:03)</scope>
</reference>
<reference key="2">
    <citation type="journal article" date="1987" name="J. Biol. Chem.">
        <title>Class II genes of the human major histocompatibility complex. Evolution of the DP region as deduced from nucleotide sequences of the four genes.</title>
        <authorList>
            <person name="Gustafsson K."/>
            <person name="Widmark E."/>
            <person name="Jonsson A.-K."/>
            <person name="Servenius B."/>
            <person name="Sachs D.H."/>
            <person name="Larhammar D."/>
            <person name="Rask L."/>
            <person name="Peterson P.A."/>
        </authorList>
    </citation>
    <scope>NUCLEOTIDE SEQUENCE [GENOMIC DNA] (ALLELE DPA1*01:03)</scope>
</reference>
<reference key="3">
    <citation type="journal article" date="1988" name="Hum. Immunol.">
        <title>Epitope recognition by a DP alpha chain-specific monoclonal antibody (DP11.1) is influenced by the interaction between the DP alpha chain and its polymorphic DP beta chain partner.</title>
        <authorList>
            <person name="Young J.A."/>
            <person name="Lindsay J."/>
            <person name="Bodmer J.G."/>
            <person name="Trowsdale J."/>
        </authorList>
    </citation>
    <scope>NUCLEOTIDE SEQUENCE [MRNA] (ALLELE DPA1*01:03)</scope>
</reference>
<reference key="4">
    <citation type="journal article" date="2004" name="Nat. Genet.">
        <title>Complete sequencing and characterization of 21,243 full-length human cDNAs.</title>
        <authorList>
            <person name="Ota T."/>
            <person name="Suzuki Y."/>
            <person name="Nishikawa T."/>
            <person name="Otsuki T."/>
            <person name="Sugiyama T."/>
            <person name="Irie R."/>
            <person name="Wakamatsu A."/>
            <person name="Hayashi K."/>
            <person name="Sato H."/>
            <person name="Nagai K."/>
            <person name="Kimura K."/>
            <person name="Makita H."/>
            <person name="Sekine M."/>
            <person name="Obayashi M."/>
            <person name="Nishi T."/>
            <person name="Shibahara T."/>
            <person name="Tanaka T."/>
            <person name="Ishii S."/>
            <person name="Yamamoto J."/>
            <person name="Saito K."/>
            <person name="Kawai Y."/>
            <person name="Isono Y."/>
            <person name="Nakamura Y."/>
            <person name="Nagahari K."/>
            <person name="Murakami K."/>
            <person name="Yasuda T."/>
            <person name="Iwayanagi T."/>
            <person name="Wagatsuma M."/>
            <person name="Shiratori A."/>
            <person name="Sudo H."/>
            <person name="Hosoiri T."/>
            <person name="Kaku Y."/>
            <person name="Kodaira H."/>
            <person name="Kondo H."/>
            <person name="Sugawara M."/>
            <person name="Takahashi M."/>
            <person name="Kanda K."/>
            <person name="Yokoi T."/>
            <person name="Furuya T."/>
            <person name="Kikkawa E."/>
            <person name="Omura Y."/>
            <person name="Abe K."/>
            <person name="Kamihara K."/>
            <person name="Katsuta N."/>
            <person name="Sato K."/>
            <person name="Tanikawa M."/>
            <person name="Yamazaki M."/>
            <person name="Ninomiya K."/>
            <person name="Ishibashi T."/>
            <person name="Yamashita H."/>
            <person name="Murakawa K."/>
            <person name="Fujimori K."/>
            <person name="Tanai H."/>
            <person name="Kimata M."/>
            <person name="Watanabe M."/>
            <person name="Hiraoka S."/>
            <person name="Chiba Y."/>
            <person name="Ishida S."/>
            <person name="Ono Y."/>
            <person name="Takiguchi S."/>
            <person name="Watanabe S."/>
            <person name="Yosida M."/>
            <person name="Hotuta T."/>
            <person name="Kusano J."/>
            <person name="Kanehori K."/>
            <person name="Takahashi-Fujii A."/>
            <person name="Hara H."/>
            <person name="Tanase T.-O."/>
            <person name="Nomura Y."/>
            <person name="Togiya S."/>
            <person name="Komai F."/>
            <person name="Hara R."/>
            <person name="Takeuchi K."/>
            <person name="Arita M."/>
            <person name="Imose N."/>
            <person name="Musashino K."/>
            <person name="Yuuki H."/>
            <person name="Oshima A."/>
            <person name="Sasaki N."/>
            <person name="Aotsuka S."/>
            <person name="Yoshikawa Y."/>
            <person name="Matsunawa H."/>
            <person name="Ichihara T."/>
            <person name="Shiohata N."/>
            <person name="Sano S."/>
            <person name="Moriya S."/>
            <person name="Momiyama H."/>
            <person name="Satoh N."/>
            <person name="Takami S."/>
            <person name="Terashima Y."/>
            <person name="Suzuki O."/>
            <person name="Nakagawa S."/>
            <person name="Senoh A."/>
            <person name="Mizoguchi H."/>
            <person name="Goto Y."/>
            <person name="Shimizu F."/>
            <person name="Wakebe H."/>
            <person name="Hishigaki H."/>
            <person name="Watanabe T."/>
            <person name="Sugiyama A."/>
            <person name="Takemoto M."/>
            <person name="Kawakami B."/>
            <person name="Yamazaki M."/>
            <person name="Watanabe K."/>
            <person name="Kumagai A."/>
            <person name="Itakura S."/>
            <person name="Fukuzumi Y."/>
            <person name="Fujimori Y."/>
            <person name="Komiyama M."/>
            <person name="Tashiro H."/>
            <person name="Tanigami A."/>
            <person name="Fujiwara T."/>
            <person name="Ono T."/>
            <person name="Yamada K."/>
            <person name="Fujii Y."/>
            <person name="Ozaki K."/>
            <person name="Hirao M."/>
            <person name="Ohmori Y."/>
            <person name="Kawabata A."/>
            <person name="Hikiji T."/>
            <person name="Kobatake N."/>
            <person name="Inagaki H."/>
            <person name="Ikema Y."/>
            <person name="Okamoto S."/>
            <person name="Okitani R."/>
            <person name="Kawakami T."/>
            <person name="Noguchi S."/>
            <person name="Itoh T."/>
            <person name="Shigeta K."/>
            <person name="Senba T."/>
            <person name="Matsumura K."/>
            <person name="Nakajima Y."/>
            <person name="Mizuno T."/>
            <person name="Morinaga M."/>
            <person name="Sasaki M."/>
            <person name="Togashi T."/>
            <person name="Oyama M."/>
            <person name="Hata H."/>
            <person name="Watanabe M."/>
            <person name="Komatsu T."/>
            <person name="Mizushima-Sugano J."/>
            <person name="Satoh T."/>
            <person name="Shirai Y."/>
            <person name="Takahashi Y."/>
            <person name="Nakagawa K."/>
            <person name="Okumura K."/>
            <person name="Nagase T."/>
            <person name="Nomura N."/>
            <person name="Kikuchi H."/>
            <person name="Masuho Y."/>
            <person name="Yamashita R."/>
            <person name="Nakai K."/>
            <person name="Yada T."/>
            <person name="Nakamura Y."/>
            <person name="Ohara O."/>
            <person name="Isogai T."/>
            <person name="Sugano S."/>
        </authorList>
    </citation>
    <scope>NUCLEOTIDE SEQUENCE [LARGE SCALE MRNA]</scope>
    <source>
        <tissue>Thymus</tissue>
    </source>
</reference>
<reference key="5">
    <citation type="journal article" date="2003" name="Nature">
        <title>The DNA sequence and analysis of human chromosome 6.</title>
        <authorList>
            <person name="Mungall A.J."/>
            <person name="Palmer S.A."/>
            <person name="Sims S.K."/>
            <person name="Edwards C.A."/>
            <person name="Ashurst J.L."/>
            <person name="Wilming L."/>
            <person name="Jones M.C."/>
            <person name="Horton R."/>
            <person name="Hunt S.E."/>
            <person name="Scott C.E."/>
            <person name="Gilbert J.G.R."/>
            <person name="Clamp M.E."/>
            <person name="Bethel G."/>
            <person name="Milne S."/>
            <person name="Ainscough R."/>
            <person name="Almeida J.P."/>
            <person name="Ambrose K.D."/>
            <person name="Andrews T.D."/>
            <person name="Ashwell R.I.S."/>
            <person name="Babbage A.K."/>
            <person name="Bagguley C.L."/>
            <person name="Bailey J."/>
            <person name="Banerjee R."/>
            <person name="Barker D.J."/>
            <person name="Barlow K.F."/>
            <person name="Bates K."/>
            <person name="Beare D.M."/>
            <person name="Beasley H."/>
            <person name="Beasley O."/>
            <person name="Bird C.P."/>
            <person name="Blakey S.E."/>
            <person name="Bray-Allen S."/>
            <person name="Brook J."/>
            <person name="Brown A.J."/>
            <person name="Brown J.Y."/>
            <person name="Burford D.C."/>
            <person name="Burrill W."/>
            <person name="Burton J."/>
            <person name="Carder C."/>
            <person name="Carter N.P."/>
            <person name="Chapman J.C."/>
            <person name="Clark S.Y."/>
            <person name="Clark G."/>
            <person name="Clee C.M."/>
            <person name="Clegg S."/>
            <person name="Cobley V."/>
            <person name="Collier R.E."/>
            <person name="Collins J.E."/>
            <person name="Colman L.K."/>
            <person name="Corby N.R."/>
            <person name="Coville G.J."/>
            <person name="Culley K.M."/>
            <person name="Dhami P."/>
            <person name="Davies J."/>
            <person name="Dunn M."/>
            <person name="Earthrowl M.E."/>
            <person name="Ellington A.E."/>
            <person name="Evans K.A."/>
            <person name="Faulkner L."/>
            <person name="Francis M.D."/>
            <person name="Frankish A."/>
            <person name="Frankland J."/>
            <person name="French L."/>
            <person name="Garner P."/>
            <person name="Garnett J."/>
            <person name="Ghori M.J."/>
            <person name="Gilby L.M."/>
            <person name="Gillson C.J."/>
            <person name="Glithero R.J."/>
            <person name="Grafham D.V."/>
            <person name="Grant M."/>
            <person name="Gribble S."/>
            <person name="Griffiths C."/>
            <person name="Griffiths M.N.D."/>
            <person name="Hall R."/>
            <person name="Halls K.S."/>
            <person name="Hammond S."/>
            <person name="Harley J.L."/>
            <person name="Hart E.A."/>
            <person name="Heath P.D."/>
            <person name="Heathcott R."/>
            <person name="Holmes S.J."/>
            <person name="Howden P.J."/>
            <person name="Howe K.L."/>
            <person name="Howell G.R."/>
            <person name="Huckle E."/>
            <person name="Humphray S.J."/>
            <person name="Humphries M.D."/>
            <person name="Hunt A.R."/>
            <person name="Johnson C.M."/>
            <person name="Joy A.A."/>
            <person name="Kay M."/>
            <person name="Keenan S.J."/>
            <person name="Kimberley A.M."/>
            <person name="King A."/>
            <person name="Laird G.K."/>
            <person name="Langford C."/>
            <person name="Lawlor S."/>
            <person name="Leongamornlert D.A."/>
            <person name="Leversha M."/>
            <person name="Lloyd C.R."/>
            <person name="Lloyd D.M."/>
            <person name="Loveland J.E."/>
            <person name="Lovell J."/>
            <person name="Martin S."/>
            <person name="Mashreghi-Mohammadi M."/>
            <person name="Maslen G.L."/>
            <person name="Matthews L."/>
            <person name="McCann O.T."/>
            <person name="McLaren S.J."/>
            <person name="McLay K."/>
            <person name="McMurray A."/>
            <person name="Moore M.J.F."/>
            <person name="Mullikin J.C."/>
            <person name="Niblett D."/>
            <person name="Nickerson T."/>
            <person name="Novik K.L."/>
            <person name="Oliver K."/>
            <person name="Overton-Larty E.K."/>
            <person name="Parker A."/>
            <person name="Patel R."/>
            <person name="Pearce A.V."/>
            <person name="Peck A.I."/>
            <person name="Phillimore B.J.C.T."/>
            <person name="Phillips S."/>
            <person name="Plumb R.W."/>
            <person name="Porter K.M."/>
            <person name="Ramsey Y."/>
            <person name="Ranby S.A."/>
            <person name="Rice C.M."/>
            <person name="Ross M.T."/>
            <person name="Searle S.M."/>
            <person name="Sehra H.K."/>
            <person name="Sheridan E."/>
            <person name="Skuce C.D."/>
            <person name="Smith S."/>
            <person name="Smith M."/>
            <person name="Spraggon L."/>
            <person name="Squares S.L."/>
            <person name="Steward C.A."/>
            <person name="Sycamore N."/>
            <person name="Tamlyn-Hall G."/>
            <person name="Tester J."/>
            <person name="Theaker A.J."/>
            <person name="Thomas D.W."/>
            <person name="Thorpe A."/>
            <person name="Tracey A."/>
            <person name="Tromans A."/>
            <person name="Tubby B."/>
            <person name="Wall M."/>
            <person name="Wallis J.M."/>
            <person name="West A.P."/>
            <person name="White S.S."/>
            <person name="Whitehead S.L."/>
            <person name="Whittaker H."/>
            <person name="Wild A."/>
            <person name="Willey D.J."/>
            <person name="Wilmer T.E."/>
            <person name="Wood J.M."/>
            <person name="Wray P.W."/>
            <person name="Wyatt J.C."/>
            <person name="Young L."/>
            <person name="Younger R.M."/>
            <person name="Bentley D.R."/>
            <person name="Coulson A."/>
            <person name="Durbin R.M."/>
            <person name="Hubbard T."/>
            <person name="Sulston J.E."/>
            <person name="Dunham I."/>
            <person name="Rogers J."/>
            <person name="Beck S."/>
        </authorList>
    </citation>
    <scope>NUCLEOTIDE SEQUENCE [LARGE SCALE GENOMIC DNA] (ALLELE DPA1*01:03)</scope>
</reference>
<reference key="6">
    <citation type="submission" date="2005-07" db="EMBL/GenBank/DDBJ databases">
        <authorList>
            <person name="Mural R.J."/>
            <person name="Istrail S."/>
            <person name="Sutton G."/>
            <person name="Florea L."/>
            <person name="Halpern A.L."/>
            <person name="Mobarry C.M."/>
            <person name="Lippert R."/>
            <person name="Walenz B."/>
            <person name="Shatkay H."/>
            <person name="Dew I."/>
            <person name="Miller J.R."/>
            <person name="Flanigan M.J."/>
            <person name="Edwards N.J."/>
            <person name="Bolanos R."/>
            <person name="Fasulo D."/>
            <person name="Halldorsson B.V."/>
            <person name="Hannenhalli S."/>
            <person name="Turner R."/>
            <person name="Yooseph S."/>
            <person name="Lu F."/>
            <person name="Nusskern D.R."/>
            <person name="Shue B.C."/>
            <person name="Zheng X.H."/>
            <person name="Zhong F."/>
            <person name="Delcher A.L."/>
            <person name="Huson D.H."/>
            <person name="Kravitz S.A."/>
            <person name="Mouchard L."/>
            <person name="Reinert K."/>
            <person name="Remington K.A."/>
            <person name="Clark A.G."/>
            <person name="Waterman M.S."/>
            <person name="Eichler E.E."/>
            <person name="Adams M.D."/>
            <person name="Hunkapiller M.W."/>
            <person name="Myers E.W."/>
            <person name="Venter J.C."/>
        </authorList>
    </citation>
    <scope>NUCLEOTIDE SEQUENCE [LARGE SCALE GENOMIC DNA]</scope>
</reference>
<reference key="7">
    <citation type="journal article" date="1984" name="Nature">
        <title>Isotypic and allotypic variation of human class II histocompatibility antigen alpha-chain genes.</title>
        <authorList>
            <person name="Auffray C."/>
            <person name="Lillie J.W."/>
            <person name="Arnot D."/>
            <person name="Grossberger D."/>
            <person name="Kappes D."/>
            <person name="Strominger J.L."/>
        </authorList>
    </citation>
    <scope>NUCLEOTIDE SEQUENCE [MRNA] OF 28-260 (ALLELE DPA1*01:03)</scope>
</reference>
<reference key="8">
    <citation type="journal article" date="1997" name="Tissue Antigens">
        <title>A novel DPA1 allele (DPA1*0203) composed of known epitopes.</title>
        <authorList>
            <person name="Muntau B."/>
            <person name="Thye T."/>
            <person name="Pirmez C."/>
            <person name="Horstmann R.D."/>
        </authorList>
    </citation>
    <scope>NUCLEOTIDE SEQUENCE [GENOMIC DNA] OF 32-115 (ALLELE DPA1*02:03)</scope>
</reference>
<reference key="9">
    <citation type="journal article" date="1998" name="Tissue Antigens">
        <title>Three new DP alleles identified in sub-Saharan Africa: DPB1*7401, DPA1*02013, and DPA1*0302.</title>
        <authorList>
            <person name="Steiner L.L."/>
            <person name="Cavalli A."/>
            <person name="Zimmerman P.A."/>
            <person name="Boatin B.A."/>
            <person name="Titanji V.P."/>
            <person name="Bradley J.E."/>
            <person name="Lucius R."/>
            <person name="Nutman T.B."/>
            <person name="Begovich A.B."/>
        </authorList>
    </citation>
    <scope>NUCLEOTIDE SEQUENCE [GENOMIC DNA] OF 34-115 (ALLELE DPA1*03:02)</scope>
</reference>
<reference key="10">
    <citation type="journal article" date="1995" name="Tissue Antigens">
        <title>Sequencing-based typing reveals new insight in HLA-DPA1 polymorphism.</title>
        <authorList>
            <person name="Rozemuller E.H."/>
            <person name="Bouwens A.G."/>
            <person name="van Oort E."/>
            <person name="Versluis L.F."/>
            <person name="Marsh S.G."/>
            <person name="Bodmer J.G."/>
            <person name="Tilanus M.G."/>
        </authorList>
    </citation>
    <scope>NUCLEOTIDE SEQUENCE [GENOMIC DNA] OF 35-116 AND 211-260 (ALLELE DPA1*01:04)</scope>
    <scope>NUCLEOTIDE SEQUENCE [GENOMIC DNA] OF 35-229 (ALLELE DPA1*02:01)</scope>
    <scope>NUCLEOTIDE SEQUENCE [GENOMIC DNA] OF 41-116 AND 211-260 (ALLELE DPA1*02:02)</scope>
    <scope>NUCLEOTIDE SEQUENCE [GENOMIC DNA] OF 41-115 AND 211-260 (ALLELES DPA1*03:01 AND DPA1*401)</scope>
</reference>
<reference key="11">
    <citation type="journal article" date="2000" name="Tissue Antigens">
        <title>A new HLA-DPA1 allele, DPA1*02016, identified in African-American population.</title>
        <authorList>
            <person name="McDaniel D.O."/>
            <person name="Nguyen C."/>
            <person name="McDaniel L.S."/>
        </authorList>
    </citation>
    <scope>NUCLEOTIDE SEQUENCE [GENOMIC DNA] OF 35-117 (ALLELE DPA1*02:01)</scope>
</reference>
<reference key="12">
    <citation type="journal article" date="2005" name="Tissue Antigens">
        <title>High-resolution sequence-based DPA1 typing identified two novel DPA1 alleles, DPA1*010303 and DPA1*0303, from a Kenyan population.</title>
        <authorList>
            <person name="Luo M."/>
            <person name="Bamforth J."/>
            <person name="Gill K."/>
            <person name="Cohen C."/>
            <person name="Brunham R.C."/>
            <person name="Plummer F.A."/>
        </authorList>
    </citation>
    <scope>NUCLEOTIDE SEQUENCE [GENOMIC DNA] OF 35-115 (ALLELE DPA1*03:03)</scope>
</reference>
<reference key="13">
    <citation type="journal article" date="2008" name="Hum. Immunol.">
        <title>Identification of a novel DPA1 allele, DPA1*010602, in an East African population.</title>
        <authorList>
            <person name="Peterson T.A."/>
            <person name="Luo M."/>
            <person name="Mao X."/>
            <person name="Brunham R.C."/>
            <person name="Plummer F.A."/>
        </authorList>
    </citation>
    <scope>NUCLEOTIDE SEQUENCE [GENOMIC DNA] OF 35-115 (ALLELE DPA1*01:06)</scope>
</reference>
<reference key="14">
    <citation type="journal article" date="2008" name="Tissue Antigens">
        <title>Description of two novel HLA-DPA1 alleles: DPA1*0110 and DPA1*010304.</title>
        <authorList>
            <person name="Lee K.W."/>
        </authorList>
    </citation>
    <scope>NUCLEOTIDE SEQUENCE [GENOMIC DNA] OF 35-115 (ALLELES DPA1*01:03 AND DPA1*01:10)</scope>
</reference>
<reference key="15">
    <citation type="journal article" date="2008" name="Tissue Antigens">
        <title>A novel HLA-DPA1*0204 allele was identified in a Chinese individual.</title>
        <authorList>
            <person name="Zhao H."/>
            <person name="Dai W.-J."/>
            <person name="He Y.-M."/>
            <person name="Zhu F.-M."/>
            <person name="Yan L.-X."/>
        </authorList>
    </citation>
    <scope>NUCLEOTIDE SEQUENCE [GENOMIC DNA] OF 35-115 (ALLELE DPA1*02:04)</scope>
</reference>
<reference key="16">
    <citation type="submission" date="1997-01" db="EMBL/GenBank/DDBJ databases">
        <authorList>
            <person name="Steiner L."/>
            <person name="Begovich A."/>
            <person name="Suraj V."/>
        </authorList>
    </citation>
    <scope>NUCLEOTIDE SEQUENCE [GENOMIC DNA] OF 35-115 (ALLELE DPA1*01:06)</scope>
</reference>
<reference key="17">
    <citation type="submission" date="2001-02" db="EMBL/GenBank/DDBJ databases">
        <title>One new DPA1 Allele.</title>
        <authorList>
            <person name="Grams S.E."/>
            <person name="Begovich A."/>
            <person name="Mangaccat J."/>
        </authorList>
    </citation>
    <scope>NUCLEOTIDE SEQUENCE [GENOMIC DNA] OF 35-115 (ALLELE DPA1*01:08)</scope>
</reference>
<reference key="18">
    <citation type="submission" date="2004-06" db="EMBL/GenBank/DDBJ databases">
        <title>Novel human HLA-DPA1 allele identified in potential bone marrow donors.</title>
        <authorList>
            <person name="Bassinger S."/>
            <person name="Wu J."/>
            <person name="Williams T.M."/>
        </authorList>
    </citation>
    <scope>NUCLEOTIDE SEQUENCE [GENOMIC DNA] OF 35-115 (ALLELE DPA1*01:09)</scope>
</reference>
<reference key="19">
    <citation type="submission" date="1998-07" db="EMBL/GenBank/DDBJ databases">
        <title>DPA1 polymorphism in Polynesians.</title>
        <authorList>
            <person name="Varney M.D."/>
            <person name="Gavrilidis A."/>
            <person name="Abbott W."/>
        </authorList>
    </citation>
    <scope>NUCLEOTIDE SEQUENCE [GENOMIC DNA] OF 36-115 (ALLELE DPA1*01:07)</scope>
</reference>
<reference key="20">
    <citation type="journal article" date="1996" name="Tissue Antigens">
        <title>DPA1*0105, a novel DPA1 variant in a negrois population.</title>
        <authorList>
            <person name="May J."/>
            <person name="Krestchmer C."/>
            <person name="Schnittger L."/>
            <person name="Striecker R."/>
            <person name="Kremoner P.G."/>
            <person name="Meyer C.G."/>
        </authorList>
    </citation>
    <scope>NUCLEOTIDE SEQUENCE [GENOMIC DNA] OF 41-115 (ALLELE DPA1*01:05)</scope>
</reference>
<reference key="21">
    <citation type="journal article" date="1995" name="Immunogenetics">
        <title>Exon 2, 3, and 4 polymorphism of HLA-DPA1.</title>
        <authorList>
            <person name="Rozemuller E.H."/>
            <person name="Versluis L.F."/>
            <person name="Bouwens A.G."/>
            <person name="Tilanus M.G."/>
        </authorList>
    </citation>
    <scope>NUCLEOTIDE SEQUENCE [GENOMIC DNA] OF 117-210 (ALLELES DPA1*01:04; DPA1*02:02; DPA1*03:01 AND DPA1*04:01)</scope>
</reference>
<reference key="22">
    <citation type="journal article" date="1983" name="Proc. Natl. Acad. Sci. U.S.A.">
        <title>Sequences related to HLA-DR alpha chain on human chromosome 6: restriction enzyme polymorphism detected with DC alpha chain probes.</title>
        <authorList>
            <person name="Trowsdale J."/>
            <person name="Lee J."/>
            <person name="Carey J."/>
            <person name="Grosveld F."/>
            <person name="Bodmer J."/>
            <person name="Bodmer W."/>
        </authorList>
    </citation>
    <scope>NUCLEOTIDE SEQUENCE [GENOMIC DNA] OF 178-209 (ALLELE DPA1*01:03)</scope>
</reference>
<reference key="23">
    <citation type="journal article" date="1996" name="Cell">
        <title>Invariant chain structure and MHC class II function.</title>
        <authorList>
            <person name="Cresswell P."/>
        </authorList>
    </citation>
    <scope>REVIEW</scope>
</reference>
<reference key="24">
    <citation type="journal article" date="2001" name="Mol. Immunol.">
        <title>Presentation of antigens by MHC class II molecules: getting the most out of them.</title>
        <authorList>
            <person name="Villadangos J.A."/>
        </authorList>
    </citation>
    <scope>REVIEW</scope>
</reference>
<reference key="25">
    <citation type="journal article" date="2008" name="EMBO J.">
        <title>MHC class II molecules on the move for successful antigen presentation.</title>
        <authorList>
            <person name="Rocha N."/>
            <person name="Neefjes J."/>
        </authorList>
    </citation>
    <scope>REVIEW</scope>
</reference>
<reference key="26">
    <citation type="journal article" date="2007" name="Immunity">
        <title>Autophagy in MHC class II presentation: sampling from within.</title>
        <authorList>
            <person name="Menendez-Benito V."/>
            <person name="Neefjes J."/>
        </authorList>
    </citation>
    <scope>REVIEW</scope>
</reference>
<reference key="27">
    <citation type="journal article" date="2009" name="J. Cell Sci.">
        <title>MHC class II transport at a glance.</title>
        <authorList>
            <person name="Berger A.C."/>
            <person name="Roche P.A."/>
        </authorList>
    </citation>
    <scope>REVIEW</scope>
</reference>
<reference key="28">
    <citation type="journal article" date="2009" name="World J. Gastroenterol.">
        <title>CD74 in antigen presentation, inflammation, and cancers of the gastrointestinal tract.</title>
        <authorList>
            <person name="Beswick E.J."/>
            <person name="Reyes V.E."/>
        </authorList>
    </citation>
    <scope>REVIEW</scope>
</reference>
<reference key="29">
    <citation type="journal article" date="2009" name="J. Proteome Res.">
        <title>Glycoproteomics analysis of human liver tissue by combination of multiple enzyme digestion and hydrazide chemistry.</title>
        <authorList>
            <person name="Chen R."/>
            <person name="Jiang X."/>
            <person name="Sun D."/>
            <person name="Han G."/>
            <person name="Wang F."/>
            <person name="Ye M."/>
            <person name="Wang L."/>
            <person name="Zou H."/>
        </authorList>
    </citation>
    <scope>GLYCOSYLATION [LARGE SCALE ANALYSIS] AT ASN-149</scope>
    <source>
        <tissue>Liver</tissue>
    </source>
</reference>
<reference key="30">
    <citation type="journal article" date="2014" name="J. Proteomics">
        <title>An enzyme assisted RP-RPLC approach for in-depth analysis of human liver phosphoproteome.</title>
        <authorList>
            <person name="Bian Y."/>
            <person name="Song C."/>
            <person name="Cheng K."/>
            <person name="Dong M."/>
            <person name="Wang F."/>
            <person name="Huang J."/>
            <person name="Sun D."/>
            <person name="Wang L."/>
            <person name="Ye M."/>
            <person name="Zou H."/>
        </authorList>
    </citation>
    <scope>IDENTIFICATION BY MASS SPECTROMETRY [LARGE SCALE ANALYSIS]</scope>
    <source>
        <tissue>Liver</tissue>
    </source>
</reference>
<feature type="signal peptide">
    <location>
        <begin position="1"/>
        <end position="28"/>
    </location>
</feature>
<feature type="chain" id="PRO_0000018967" description="HLA class II histocompatibility antigen, DP alpha 1 chain">
    <location>
        <begin position="29"/>
        <end position="260"/>
    </location>
</feature>
<feature type="topological domain" description="Extracellular" evidence="1">
    <location>
        <begin position="29"/>
        <end position="222"/>
    </location>
</feature>
<feature type="transmembrane region" description="Helical" evidence="1">
    <location>
        <begin position="223"/>
        <end position="245"/>
    </location>
</feature>
<feature type="topological domain" description="Cytoplasmic" evidence="1">
    <location>
        <begin position="246"/>
        <end position="260"/>
    </location>
</feature>
<feature type="domain" description="Ig-like C1-type">
    <location>
        <begin position="118"/>
        <end position="210"/>
    </location>
</feature>
<feature type="region of interest" description="Alpha-1">
    <location>
        <begin position="29"/>
        <end position="115"/>
    </location>
</feature>
<feature type="region of interest" description="Alpha-2">
    <location>
        <begin position="116"/>
        <end position="209"/>
    </location>
</feature>
<feature type="region of interest" description="Connecting peptide">
    <location>
        <begin position="210"/>
        <end position="222"/>
    </location>
</feature>
<feature type="glycosylation site" description="N-linked (GlcNAc...) asparagine" evidence="1">
    <location>
        <position position="109"/>
    </location>
</feature>
<feature type="glycosylation site" description="N-linked (GlcNAc...) asparagine" evidence="3">
    <location>
        <position position="149"/>
    </location>
</feature>
<feature type="disulfide bond" evidence="2">
    <location>
        <begin position="138"/>
        <end position="194"/>
    </location>
</feature>
<feature type="sequence variant" id="VAR_058832" description="In allele DPA1*02:02, allele DPA1*02:04, allele DPA1*03:01, allele DPA1*03:02 and allele DPA1*03:03; requires 2 nucleotide substitutions; dbSNP:rs386699859.">
    <original>A</original>
    <variation>M</variation>
    <location>
        <position position="42"/>
    </location>
</feature>
<feature type="sequence variant" id="VAR_047683" description="In dbSNP:rs1126533.">
    <original>A</original>
    <variation>T</variation>
    <location>
        <position position="42"/>
    </location>
</feature>
<feature type="sequence variant" id="VAR_047684" description="In dbSNP:rs1126534.">
    <original>A</original>
    <variation>V</variation>
    <location>
        <position position="42"/>
    </location>
</feature>
<feature type="sequence variant" id="VAR_058833" description="In allele DPA1*04:01; dbSNP:rs2308907.">
    <original>P</original>
    <variation>T</variation>
    <location>
        <position position="49"/>
    </location>
</feature>
<feature type="sequence variant" id="VAR_058834" description="In allele DPA1*01:09; dbSNP:rs1042175.">
    <original>M</original>
    <variation>T</variation>
    <location>
        <position position="54"/>
    </location>
</feature>
<feature type="sequence variant" id="VAR_058835" description="In allele DPA1*01:04, allele DPA1*01:08, allele DPA1*03:03 and allele DPA1*04:01; dbSNP:rs2308910.">
    <original>E</original>
    <variation>D</variation>
    <location>
        <position position="59"/>
    </location>
</feature>
<feature type="sequence variant" id="VAR_058836" description="In dbSNP:rs2308912.">
    <original>M</original>
    <variation>K</variation>
    <location>
        <position position="62"/>
    </location>
</feature>
<feature type="sequence variant" id="VAR_047685" description="In dbSNP:rs2308911.">
    <original>M</original>
    <variation>L</variation>
    <location>
        <position position="62"/>
    </location>
</feature>
<feature type="sequence variant" id="VAR_058850" description="In allele DPA1*01:06, allele DPA1*02:01, allele DPA1*02:02 and allele DPA1*02:04; requires 2 nucleotide substitutions; dbSNP:rs36013091.">
    <original>M</original>
    <variation>Q</variation>
    <location>
        <position position="62"/>
    </location>
</feature>
<feature type="sequence variant" id="VAR_058837" description="In allele DPA1*01:10; dbSNP:rs72558171.">
    <original>W</original>
    <variation>C</variation>
    <location>
        <position position="74"/>
    </location>
</feature>
<feature type="sequence variant" id="VAR_047686" description="In allele DPA1*01:08, allele DPA1*02:01, allele DPA1*02:02, allele DPA1*02:03, allele DPA1*02:04 and allele DPA1*04:01; dbSNP:rs1042178.">
    <original>Q</original>
    <variation>R</variation>
    <location>
        <position position="81"/>
    </location>
</feature>
<feature type="sequence variant" id="VAR_058838" description="In allele DPA1*01:07; dbSNP:rs41543112.">
    <original>A</original>
    <variation>T</variation>
    <location>
        <position position="82"/>
    </location>
</feature>
<feature type="sequence variant" id="VAR_047687" description="In allele DPA1*03:01 and allele DPA1*03:03; dbSNP:rs2308917.">
    <original>L</original>
    <variation>S</variation>
    <location>
        <position position="97"/>
    </location>
</feature>
<feature type="sequence variant" id="VAR_058839" description="In allele DPA1*02:04; dbSNP:rs61759929.">
    <original>N</original>
    <variation>D</variation>
    <location>
        <position position="100"/>
    </location>
</feature>
<feature type="sequence variant" id="VAR_058840" description="In allele DPA1*04:01; dbSNP:rs41559316.">
    <original>T</original>
    <variation>I</variation>
    <location>
        <position position="103"/>
    </location>
</feature>
<feature type="sequence variant" id="VAR_058841" description="In allele DPA1*04:01; requires 2 nucleotide substitutions.">
    <original>L</original>
    <variation>A</variation>
    <location>
        <position position="104"/>
    </location>
</feature>
<feature type="sequence variant" id="VAR_047688" description="In allele DPA1*01:05, allele DPA1*02:01, allele DPA1*02:02, allele DPA1*02:03, allele DPA1*02:04 and allele DPA1*04:01; dbSNP:rs1126542.">
    <original>T</original>
    <variation>A</variation>
    <location>
        <position position="114"/>
    </location>
</feature>
<feature type="sequence variant" id="VAR_058842" description="In allele DPA1*04:01; dbSNP:rs41562016.">
    <original>P</original>
    <variation>A</variation>
    <location>
        <position position="127"/>
    </location>
</feature>
<feature type="sequence variant" id="VAR_047689" description="In allele DPA1*02:01 and allele DPA1*02:02; dbSNP:rs1042190.">
    <original>K</original>
    <variation>R</variation>
    <location>
        <position position="142"/>
    </location>
</feature>
<feature type="sequence variant" id="VAR_058843" description="In allele DPA1*02:01, allele DPA1*02:02 and allele DPA1*04:01; dbSNP:rs2308930.">
    <original>L</original>
    <variation>P</variation>
    <location>
        <position position="158"/>
    </location>
</feature>
<feature type="sequence variant" id="VAR_047690" description="In allele DPA1*02:01, allele DPA1*02:02 and allele DPA1*04:01; dbSNP:rs1042308.">
    <original>F</original>
    <variation>V</variation>
    <location>
        <position position="191"/>
    </location>
</feature>
<feature type="sequence variant" id="VAR_058844" description="In allele DPA1*04:01; dbSNP:rs17509489.">
    <original>T</original>
    <variation>A</variation>
    <location>
        <position position="221"/>
    </location>
</feature>
<feature type="sequence variant" id="VAR_058845" description="In allele DPA1*02:01, allele DPA1*02:02 and allele DPA1*04:01; dbSNP:rs1126769.">
    <original>T</original>
    <variation>P</variation>
    <location>
        <position position="259"/>
    </location>
</feature>
<feature type="sequence conflict" description="In Ref. 7; CAA25143." evidence="4" ref="7">
    <original>I</original>
    <variation>F</variation>
    <location>
        <position position="237"/>
    </location>
</feature>
<feature type="strand" evidence="5">
    <location>
        <begin position="35"/>
        <end position="49"/>
    </location>
</feature>
<feature type="strand" evidence="5">
    <location>
        <begin position="51"/>
        <end position="57"/>
    </location>
</feature>
<feature type="strand" evidence="5">
    <location>
        <begin position="60"/>
        <end position="66"/>
    </location>
</feature>
<feature type="turn" evidence="5">
    <location>
        <begin position="67"/>
        <end position="70"/>
    </location>
</feature>
<feature type="strand" evidence="5">
    <location>
        <begin position="71"/>
        <end position="76"/>
    </location>
</feature>
<feature type="helix" evidence="5">
    <location>
        <begin position="77"/>
        <end position="82"/>
    </location>
</feature>
<feature type="helix" evidence="5">
    <location>
        <begin position="87"/>
        <end position="107"/>
    </location>
</feature>
<feature type="strand" evidence="5">
    <location>
        <begin position="119"/>
        <end position="126"/>
    </location>
</feature>
<feature type="strand" evidence="5">
    <location>
        <begin position="134"/>
        <end position="146"/>
    </location>
</feature>
<feature type="strand" evidence="5">
    <location>
        <begin position="149"/>
        <end position="154"/>
    </location>
</feature>
<feature type="strand" evidence="5">
    <location>
        <begin position="157"/>
        <end position="159"/>
    </location>
</feature>
<feature type="strand" evidence="5">
    <location>
        <begin position="161"/>
        <end position="165"/>
    </location>
</feature>
<feature type="strand" evidence="5">
    <location>
        <begin position="176"/>
        <end position="184"/>
    </location>
</feature>
<feature type="strand" evidence="5">
    <location>
        <begin position="191"/>
        <end position="197"/>
    </location>
</feature>
<feature type="strand" evidence="5">
    <location>
        <begin position="201"/>
        <end position="203"/>
    </location>
</feature>
<feature type="strand" evidence="5">
    <location>
        <begin position="205"/>
        <end position="210"/>
    </location>
</feature>
<accession>P20036</accession>
<accession>A9YWH7</accession>
<accession>B9UKH4</accession>
<accession>O19722</accession>
<accession>O46883</accession>
<accession>P01905</accession>
<accession>P79554</accession>
<accession>Q2Q060</accession>
<accession>Q2Q061</accession>
<accession>Q5EY03</accession>
<accession>Q5STP1</accession>
<accession>Q6DQK4</accession>
<accession>Q9BCQ1</accession>
<accession>Q9TPX3</accession>
<accession>Q9XS10</accession>
<evidence type="ECO:0000255" key="1"/>
<evidence type="ECO:0000255" key="2">
    <source>
        <dbReference type="PROSITE-ProRule" id="PRU00114"/>
    </source>
</evidence>
<evidence type="ECO:0000269" key="3">
    <source>
    </source>
</evidence>
<evidence type="ECO:0000305" key="4"/>
<evidence type="ECO:0007829" key="5">
    <source>
        <dbReference type="PDB" id="4P5M"/>
    </source>
</evidence>
<sequence length="260" mass="29381">MRPEDRMFHIRAVILRALSLAFLLSLRGAGAIKADHVSTYAAFVQTHRPTGEFMFEFDEDEMFYVDLDKKETVWHLEEFGQAFSFEAQGGLANIAILNNNLNTLIQRSNHTQATNDPPEVTVFPKEPVELGQPNTLICHIDKFFPPVLNVTWLCNGELVTEGVAESLFLPRTDYSFHKFHYLTFVPSAEDFYDCRVEHWGLDQPLLKHWEAQEPIQMPETTETVLCALGLVLGLVGIIVGTVLIIKSLRSGHDPRAQGTL</sequence>
<gene>
    <name type="primary">HLA-DPA1</name>
    <name type="synonym">HLA-DP1A</name>
    <name type="synonym">HLASB</name>
</gene>